<evidence type="ECO:0000250" key="1"/>
<evidence type="ECO:0000250" key="2">
    <source>
        <dbReference type="UniProtKB" id="P18089"/>
    </source>
</evidence>
<evidence type="ECO:0000255" key="3">
    <source>
        <dbReference type="PROSITE-ProRule" id="PRU00521"/>
    </source>
</evidence>
<evidence type="ECO:0000256" key="4">
    <source>
        <dbReference type="SAM" id="MobiDB-lite"/>
    </source>
</evidence>
<dbReference type="EMBL" id="Y12522">
    <property type="protein sequence ID" value="CAA73122.2"/>
    <property type="status" value="ALT_SEQ"/>
    <property type="molecule type" value="Genomic_DNA"/>
</dbReference>
<dbReference type="GO" id="GO:0005886">
    <property type="term" value="C:plasma membrane"/>
    <property type="evidence" value="ECO:0007669"/>
    <property type="project" value="UniProtKB-SubCell"/>
</dbReference>
<dbReference type="GO" id="GO:0004938">
    <property type="term" value="F:alpha2-adrenergic receptor activity"/>
    <property type="evidence" value="ECO:0007669"/>
    <property type="project" value="InterPro"/>
</dbReference>
<dbReference type="GO" id="GO:0051379">
    <property type="term" value="F:epinephrine binding"/>
    <property type="evidence" value="ECO:0007669"/>
    <property type="project" value="TreeGrafter"/>
</dbReference>
<dbReference type="GO" id="GO:0030168">
    <property type="term" value="P:platelet activation"/>
    <property type="evidence" value="ECO:0007669"/>
    <property type="project" value="InterPro"/>
</dbReference>
<dbReference type="GO" id="GO:0006940">
    <property type="term" value="P:regulation of smooth muscle contraction"/>
    <property type="evidence" value="ECO:0007669"/>
    <property type="project" value="InterPro"/>
</dbReference>
<dbReference type="GO" id="GO:0019229">
    <property type="term" value="P:regulation of vasoconstriction"/>
    <property type="evidence" value="ECO:0007669"/>
    <property type="project" value="InterPro"/>
</dbReference>
<dbReference type="CDD" id="cd15321">
    <property type="entry name" value="7tmA_alpha2B_AR"/>
    <property type="match status" value="1"/>
</dbReference>
<dbReference type="FunFam" id="1.20.1070.10:FF:000330">
    <property type="entry name" value="Alpha 2B adrenergic receptor"/>
    <property type="match status" value="1"/>
</dbReference>
<dbReference type="FunFam" id="1.20.1070.10:FF:000185">
    <property type="entry name" value="Alpha-2B adrenergic receptor"/>
    <property type="match status" value="1"/>
</dbReference>
<dbReference type="Gene3D" id="1.20.1070.10">
    <property type="entry name" value="Rhodopsin 7-helix transmembrane proteins"/>
    <property type="match status" value="1"/>
</dbReference>
<dbReference type="InterPro" id="IPR000207">
    <property type="entry name" value="ADRA2B_rcpt"/>
</dbReference>
<dbReference type="InterPro" id="IPR000276">
    <property type="entry name" value="GPCR_Rhodpsn"/>
</dbReference>
<dbReference type="InterPro" id="IPR017452">
    <property type="entry name" value="GPCR_Rhodpsn_7TM"/>
</dbReference>
<dbReference type="PANTHER" id="PTHR24248">
    <property type="entry name" value="ADRENERGIC RECEPTOR-RELATED G-PROTEIN COUPLED RECEPTOR"/>
    <property type="match status" value="1"/>
</dbReference>
<dbReference type="PANTHER" id="PTHR24248:SF130">
    <property type="entry name" value="ALPHA-2B ADRENERGIC RECEPTOR"/>
    <property type="match status" value="1"/>
</dbReference>
<dbReference type="Pfam" id="PF00001">
    <property type="entry name" value="7tm_1"/>
    <property type="match status" value="1"/>
</dbReference>
<dbReference type="PRINTS" id="PR00559">
    <property type="entry name" value="ADRENRGCA2BR"/>
</dbReference>
<dbReference type="PRINTS" id="PR00237">
    <property type="entry name" value="GPCRRHODOPSN"/>
</dbReference>
<dbReference type="SMART" id="SM01381">
    <property type="entry name" value="7TM_GPCR_Srsx"/>
    <property type="match status" value="1"/>
</dbReference>
<dbReference type="SUPFAM" id="SSF81321">
    <property type="entry name" value="Family A G protein-coupled receptor-like"/>
    <property type="match status" value="1"/>
</dbReference>
<dbReference type="PROSITE" id="PS00237">
    <property type="entry name" value="G_PROTEIN_RECEP_F1_1"/>
    <property type="match status" value="1"/>
</dbReference>
<dbReference type="PROSITE" id="PS50262">
    <property type="entry name" value="G_PROTEIN_RECEP_F1_2"/>
    <property type="match status" value="1"/>
</dbReference>
<organism>
    <name type="scientific">Orycteropus afer</name>
    <name type="common">Aardvark</name>
    <dbReference type="NCBI Taxonomy" id="9818"/>
    <lineage>
        <taxon>Eukaryota</taxon>
        <taxon>Metazoa</taxon>
        <taxon>Chordata</taxon>
        <taxon>Craniata</taxon>
        <taxon>Vertebrata</taxon>
        <taxon>Euteleostomi</taxon>
        <taxon>Mammalia</taxon>
        <taxon>Eutheria</taxon>
        <taxon>Afrotheria</taxon>
        <taxon>Tubulidentata</taxon>
        <taxon>Orycteropodidae</taxon>
        <taxon>Orycteropus</taxon>
    </lineage>
</organism>
<keyword id="KW-1003">Cell membrane</keyword>
<keyword id="KW-1015">Disulfide bond</keyword>
<keyword id="KW-0297">G-protein coupled receptor</keyword>
<keyword id="KW-0449">Lipoprotein</keyword>
<keyword id="KW-0472">Membrane</keyword>
<keyword id="KW-0564">Palmitate</keyword>
<keyword id="KW-0675">Receptor</keyword>
<keyword id="KW-0807">Transducer</keyword>
<keyword id="KW-0812">Transmembrane</keyword>
<keyword id="KW-1133">Transmembrane helix</keyword>
<proteinExistence type="inferred from homology"/>
<name>ADA2B_ORYAF</name>
<protein>
    <recommendedName>
        <fullName>Alpha-2B adrenergic receptor</fullName>
    </recommendedName>
    <alternativeName>
        <fullName>Alpha-2B adrenoreceptor</fullName>
        <shortName>Alpha-2B adrenoceptor</shortName>
        <shortName>Alpha-2BAR</shortName>
    </alternativeName>
</protein>
<accession>O19032</accession>
<sequence length="388" mass="42431">AIAAVITFLILFTIFGNALVILAVLTSRSLRAPQNLFLVSLAAADILVATLIIPFSLANELLGYWYFRRTWCEVYLALDVLFCTSSIVHLCAISLDRYWAVSRALEYNSKRTPRXIKCIILTVWLIAAAISLPPLIYKGDQGPQPRGRPQCKLNQEAWYILSSSIGSFFAPCLIMILVYLRIYVIAKRSNRRGPRAKGASREGKSKQPHPFPAGASSARPPTLTSSLAVAGEANGHSKPTGEKEGKTPEDPGTLTLPPSWPAFPNSGEGQKEGICGTSPEEEAEEEEEECEPQAAPASSASACNPPLQQPQGSRVLATLRGQVLLGRGLGAAGGQWWRRRAQLTREKRFTFVLAVVIGVFVLCWFPFFFSYSLGAICPQRCKVPHGLF</sequence>
<gene>
    <name type="primary">ADRA2B</name>
</gene>
<feature type="chain" id="PRO_0000069097" description="Alpha-2B adrenergic receptor">
    <location>
        <begin position="1" status="less than"/>
        <end position="388" status="greater than"/>
    </location>
</feature>
<feature type="transmembrane region" description="Helical; Name=1" evidence="1">
    <location>
        <begin position="1" status="less than"/>
        <end position="25"/>
    </location>
</feature>
<feature type="topological domain" description="Cytoplasmic" evidence="1">
    <location>
        <begin position="26"/>
        <end position="36"/>
    </location>
</feature>
<feature type="transmembrane region" description="Helical; Name=2" evidence="1">
    <location>
        <begin position="37"/>
        <end position="62"/>
    </location>
</feature>
<feature type="topological domain" description="Extracellular" evidence="1">
    <location>
        <begin position="63"/>
        <end position="72"/>
    </location>
</feature>
<feature type="transmembrane region" description="Helical; Name=3" evidence="1">
    <location>
        <begin position="73"/>
        <end position="95"/>
    </location>
</feature>
<feature type="topological domain" description="Cytoplasmic" evidence="1">
    <location>
        <begin position="96"/>
        <end position="117"/>
    </location>
</feature>
<feature type="transmembrane region" description="Helical; Name=4" evidence="1">
    <location>
        <begin position="118"/>
        <end position="140"/>
    </location>
</feature>
<feature type="topological domain" description="Extracellular" evidence="1">
    <location>
        <begin position="141"/>
        <end position="156"/>
    </location>
</feature>
<feature type="transmembrane region" description="Helical; Name=5" evidence="1">
    <location>
        <begin position="157"/>
        <end position="180"/>
    </location>
</feature>
<feature type="topological domain" description="Cytoplasmic" evidence="1">
    <location>
        <begin position="181"/>
        <end position="352"/>
    </location>
</feature>
<feature type="transmembrane region" description="Helical; Name=6" evidence="1">
    <location>
        <begin position="353"/>
        <end position="376"/>
    </location>
</feature>
<feature type="topological domain" description="Extracellular" evidence="1">
    <location>
        <begin position="377"/>
        <end position="385"/>
    </location>
</feature>
<feature type="transmembrane region" description="Helical; Name=7" evidence="1">
    <location>
        <begin position="386"/>
        <end position="388" status="greater than"/>
    </location>
</feature>
<feature type="region of interest" description="Disordered" evidence="4">
    <location>
        <begin position="193"/>
        <end position="309"/>
    </location>
</feature>
<feature type="compositionally biased region" description="Basic and acidic residues" evidence="4">
    <location>
        <begin position="239"/>
        <end position="249"/>
    </location>
</feature>
<feature type="compositionally biased region" description="Acidic residues" evidence="4">
    <location>
        <begin position="279"/>
        <end position="291"/>
    </location>
</feature>
<feature type="compositionally biased region" description="Low complexity" evidence="4">
    <location>
        <begin position="292"/>
        <end position="302"/>
    </location>
</feature>
<feature type="site" description="Implicated in ligand binding" evidence="1">
    <location>
        <position position="79"/>
    </location>
</feature>
<feature type="site" description="Implicated in catechol agonist binding" evidence="1">
    <location>
        <position position="163"/>
    </location>
</feature>
<feature type="site" description="Implicated in catechol agonist binding" evidence="1">
    <location>
        <position position="167"/>
    </location>
</feature>
<feature type="disulfide bond" evidence="3">
    <location>
        <begin position="72"/>
        <end position="151"/>
    </location>
</feature>
<feature type="non-terminal residue">
    <location>
        <position position="1"/>
    </location>
</feature>
<feature type="non-terminal residue">
    <location>
        <position position="388"/>
    </location>
</feature>
<comment type="function">
    <text>Alpha-2 adrenergic receptors mediate the catecholamine-induced inhibition of adenylate cyclase through the action of G proteins.</text>
</comment>
<comment type="subunit">
    <text evidence="2">Interacts with RAB26. Interacts with PPP1R9B.</text>
</comment>
<comment type="subcellular location">
    <subcellularLocation>
        <location>Cell membrane</location>
        <topology>Multi-pass membrane protein</topology>
    </subcellularLocation>
</comment>
<comment type="similarity">
    <text evidence="3">Belongs to the G-protein coupled receptor 1 family. Adrenergic receptor subfamily. ADRA2B sub-subfamily.</text>
</comment>
<reference key="1">
    <citation type="journal article" date="1997" name="Nature">
        <title>Endemic African mammals shake the phylogenetic tree.</title>
        <authorList>
            <person name="Springer M.S."/>
            <person name="Cleven G.C."/>
            <person name="Madsen O.J."/>
            <person name="de Jong W.W."/>
            <person name="Waddell V.G."/>
            <person name="Amrine H.M."/>
            <person name="Stanhope M.J."/>
        </authorList>
    </citation>
    <scope>NUCLEOTIDE SEQUENCE [GENOMIC DNA]</scope>
</reference>